<sequence>MDAPINPSSPTRSSYETALERQWLIKDEPSHHVDLGCHFTLEIKAFSPKMIELLETGSLTLGSVYQGLYNLIKDKDCKGLELDRDTTHGNKLHVLAAAFLCVLRKYENQVRFYNVKTKDSLTGEIQYMSRVHIGDDNLGLFDPDTYRMIGGSFPEGIYRLNLRTQLTPRGEDDGLEIIMGTILTVPVRGPADRQPLGVLMDRQLRQFPVGTNPWSSLGEAKPKGRSLSLLRGILM</sequence>
<keyword id="KW-0053">Apoptosis</keyword>
<keyword id="KW-1043">Host membrane</keyword>
<keyword id="KW-0472">Membrane</keyword>
<keyword id="KW-1185">Reference proteome</keyword>
<keyword id="KW-0261">Viral envelope protein</keyword>
<keyword id="KW-0468">Viral matrix protein</keyword>
<keyword id="KW-0946">Virion</keyword>
<name>MATRX_MMVR</name>
<comment type="function">
    <text evidence="1">Plays a major role in assembly and budding of virion. Completely covers the ribonucleoprotein coil and keep it in condensed bullet-shaped form. Inhibits viral transcription and stimulates replication (By similarity).</text>
</comment>
<comment type="subunit">
    <text evidence="1">Homomultimer. Interacts with nucleoprotein and with the cytoplasmic domain of glycoprotein (By similarity).</text>
</comment>
<comment type="subcellular location">
    <subcellularLocation>
        <location>Virion membrane</location>
        <topology>Peripheral membrane protein</topology>
    </subcellularLocation>
    <subcellularLocation>
        <location evidence="1">Host endomembrane system</location>
        <topology evidence="1">Peripheral membrane protein</topology>
    </subcellularLocation>
</comment>
<comment type="miscellaneous">
    <text evidence="1">Most abundant protein in the virion.</text>
</comment>
<comment type="similarity">
    <text evidence="2">Belongs to the nucleorhabdovirus type-2 matrix protein family.</text>
</comment>
<gene>
    <name type="primary">M</name>
</gene>
<proteinExistence type="inferred from homology"/>
<evidence type="ECO:0000250" key="1"/>
<evidence type="ECO:0000305" key="2"/>
<feature type="chain" id="PRO_0000299247" description="Matrix protein">
    <location>
        <begin position="1"/>
        <end position="235"/>
    </location>
</feature>
<reference key="1">
    <citation type="journal article" date="2005" name="J. Virol. Methods">
        <title>Shotgun sequencing of the negative-sense RNA genome of the rhabdovirus Maize mosaic virus.</title>
        <authorList>
            <person name="Reed S.E."/>
            <person name="Tsai C.W."/>
            <person name="Willie K.J."/>
            <person name="Redinbaugh M.G."/>
            <person name="Hogenhout S.A."/>
        </authorList>
    </citation>
    <scope>NUCLEOTIDE SEQUENCE [GENOMIC RNA]</scope>
</reference>
<organismHost>
    <name type="scientific">Rottboellia</name>
    <dbReference type="NCBI Taxonomy" id="300124"/>
</organismHost>
<organismHost>
    <name type="scientific">Setaria</name>
    <dbReference type="NCBI Taxonomy" id="4554"/>
</organismHost>
<organismHost>
    <name type="scientific">Sorghum bicolor</name>
    <name type="common">Sorghum</name>
    <name type="synonym">Sorghum vulgare</name>
    <dbReference type="NCBI Taxonomy" id="4558"/>
</organismHost>
<organismHost>
    <name type="scientific">Zea mays</name>
    <name type="common">Maize</name>
    <dbReference type="NCBI Taxonomy" id="4577"/>
</organismHost>
<accession>Q6E0W8</accession>
<organism>
    <name type="scientific">Maize mosaic virus (isolate Maize/United States/Reed/2005)</name>
    <name type="common">MMV</name>
    <dbReference type="NCBI Taxonomy" id="928305"/>
    <lineage>
        <taxon>Viruses</taxon>
        <taxon>Riboviria</taxon>
        <taxon>Orthornavirae</taxon>
        <taxon>Negarnaviricota</taxon>
        <taxon>Haploviricotina</taxon>
        <taxon>Monjiviricetes</taxon>
        <taxon>Mononegavirales</taxon>
        <taxon>Rhabdoviridae</taxon>
        <taxon>Betarhabdovirinae</taxon>
        <taxon>Alphanucleorhabdovirus</taxon>
        <taxon>Alphanucleorhabdovirus maydis</taxon>
    </lineage>
</organism>
<protein>
    <recommendedName>
        <fullName>Matrix protein</fullName>
    </recommendedName>
</protein>
<dbReference type="EMBL" id="AY618418">
    <property type="protein sequence ID" value="AAT66755.1"/>
    <property type="molecule type" value="Genomic_RNA"/>
</dbReference>
<dbReference type="RefSeq" id="YP_052853.1">
    <property type="nucleotide sequence ID" value="NC_005975.1"/>
</dbReference>
<dbReference type="GeneID" id="2886117"/>
<dbReference type="KEGG" id="vg:2886117"/>
<dbReference type="Proteomes" id="UP000008593">
    <property type="component" value="Segment"/>
</dbReference>
<dbReference type="GO" id="GO:0033645">
    <property type="term" value="C:host cell endomembrane system"/>
    <property type="evidence" value="ECO:0007669"/>
    <property type="project" value="UniProtKB-SubCell"/>
</dbReference>
<dbReference type="GO" id="GO:0016020">
    <property type="term" value="C:membrane"/>
    <property type="evidence" value="ECO:0007669"/>
    <property type="project" value="UniProtKB-KW"/>
</dbReference>
<dbReference type="GO" id="GO:0019031">
    <property type="term" value="C:viral envelope"/>
    <property type="evidence" value="ECO:0007669"/>
    <property type="project" value="UniProtKB-KW"/>
</dbReference>
<dbReference type="GO" id="GO:0055036">
    <property type="term" value="C:virion membrane"/>
    <property type="evidence" value="ECO:0007669"/>
    <property type="project" value="UniProtKB-SubCell"/>
</dbReference>
<dbReference type="GO" id="GO:0039660">
    <property type="term" value="F:structural constituent of virion"/>
    <property type="evidence" value="ECO:0007669"/>
    <property type="project" value="UniProtKB-KW"/>
</dbReference>
<dbReference type="InterPro" id="IPR031454">
    <property type="entry name" value="Viral_M"/>
</dbReference>
<dbReference type="Pfam" id="PF17055">
    <property type="entry name" value="VMR2"/>
    <property type="match status" value="1"/>
</dbReference>